<protein>
    <recommendedName>
        <fullName evidence="1">6-phosphogluconolactonase</fullName>
        <shortName evidence="1">6-P-gluconolactonase</shortName>
        <ecNumber evidence="1">3.1.1.31</ecNumber>
    </recommendedName>
</protein>
<dbReference type="EC" id="3.1.1.31" evidence="1"/>
<dbReference type="EMBL" id="AL513382">
    <property type="protein sequence ID" value="CAD05233.1"/>
    <property type="molecule type" value="Genomic_DNA"/>
</dbReference>
<dbReference type="EMBL" id="AE014613">
    <property type="protein sequence ID" value="AAO69719.1"/>
    <property type="molecule type" value="Genomic_DNA"/>
</dbReference>
<dbReference type="RefSeq" id="NP_455327.1">
    <property type="nucleotide sequence ID" value="NC_003198.1"/>
</dbReference>
<dbReference type="RefSeq" id="WP_000815470.1">
    <property type="nucleotide sequence ID" value="NZ_WSUR01000021.1"/>
</dbReference>
<dbReference type="SMR" id="Q8Z8A2"/>
<dbReference type="STRING" id="220341.gene:17584823"/>
<dbReference type="KEGG" id="stt:t2102"/>
<dbReference type="KEGG" id="sty:STY0818"/>
<dbReference type="PATRIC" id="fig|220341.7.peg.822"/>
<dbReference type="eggNOG" id="COG2706">
    <property type="taxonomic scope" value="Bacteria"/>
</dbReference>
<dbReference type="HOGENOM" id="CLU_038716_2_0_6"/>
<dbReference type="OMA" id="NKEFIGY"/>
<dbReference type="UniPathway" id="UPA00115">
    <property type="reaction ID" value="UER00409"/>
</dbReference>
<dbReference type="Proteomes" id="UP000000541">
    <property type="component" value="Chromosome"/>
</dbReference>
<dbReference type="Proteomes" id="UP000002670">
    <property type="component" value="Chromosome"/>
</dbReference>
<dbReference type="GO" id="GO:0005829">
    <property type="term" value="C:cytosol"/>
    <property type="evidence" value="ECO:0007669"/>
    <property type="project" value="TreeGrafter"/>
</dbReference>
<dbReference type="GO" id="GO:0017057">
    <property type="term" value="F:6-phosphogluconolactonase activity"/>
    <property type="evidence" value="ECO:0007669"/>
    <property type="project" value="UniProtKB-UniRule"/>
</dbReference>
<dbReference type="GO" id="GO:0006006">
    <property type="term" value="P:glucose metabolic process"/>
    <property type="evidence" value="ECO:0007669"/>
    <property type="project" value="UniProtKB-KW"/>
</dbReference>
<dbReference type="GO" id="GO:0009051">
    <property type="term" value="P:pentose-phosphate shunt, oxidative branch"/>
    <property type="evidence" value="ECO:0007669"/>
    <property type="project" value="UniProtKB-UniRule"/>
</dbReference>
<dbReference type="FunFam" id="2.130.10.10:FF:000051">
    <property type="entry name" value="6-phosphogluconolactonase"/>
    <property type="match status" value="1"/>
</dbReference>
<dbReference type="Gene3D" id="2.130.10.10">
    <property type="entry name" value="YVTN repeat-like/Quinoprotein amine dehydrogenase"/>
    <property type="match status" value="1"/>
</dbReference>
<dbReference type="HAMAP" id="MF_01605">
    <property type="entry name" value="6P_gluconolactonase"/>
    <property type="match status" value="1"/>
</dbReference>
<dbReference type="InterPro" id="IPR022528">
    <property type="entry name" value="6-phosphogluconolactonase_YbhE"/>
</dbReference>
<dbReference type="InterPro" id="IPR050282">
    <property type="entry name" value="Cycloisomerase_2"/>
</dbReference>
<dbReference type="InterPro" id="IPR019405">
    <property type="entry name" value="Lactonase_7-beta_prop"/>
</dbReference>
<dbReference type="InterPro" id="IPR011045">
    <property type="entry name" value="N2O_reductase_N"/>
</dbReference>
<dbReference type="InterPro" id="IPR015943">
    <property type="entry name" value="WD40/YVTN_repeat-like_dom_sf"/>
</dbReference>
<dbReference type="NCBIfam" id="NF008258">
    <property type="entry name" value="PRK11028.1"/>
    <property type="match status" value="1"/>
</dbReference>
<dbReference type="PANTHER" id="PTHR30344:SF1">
    <property type="entry name" value="6-PHOSPHOGLUCONOLACTONASE"/>
    <property type="match status" value="1"/>
</dbReference>
<dbReference type="PANTHER" id="PTHR30344">
    <property type="entry name" value="6-PHOSPHOGLUCONOLACTONASE-RELATED"/>
    <property type="match status" value="1"/>
</dbReference>
<dbReference type="Pfam" id="PF10282">
    <property type="entry name" value="Lactonase"/>
    <property type="match status" value="1"/>
</dbReference>
<dbReference type="SUPFAM" id="SSF50974">
    <property type="entry name" value="Nitrous oxide reductase, N-terminal domain"/>
    <property type="match status" value="2"/>
</dbReference>
<proteinExistence type="inferred from homology"/>
<reference key="1">
    <citation type="journal article" date="2001" name="Nature">
        <title>Complete genome sequence of a multiple drug resistant Salmonella enterica serovar Typhi CT18.</title>
        <authorList>
            <person name="Parkhill J."/>
            <person name="Dougan G."/>
            <person name="James K.D."/>
            <person name="Thomson N.R."/>
            <person name="Pickard D."/>
            <person name="Wain J."/>
            <person name="Churcher C.M."/>
            <person name="Mungall K.L."/>
            <person name="Bentley S.D."/>
            <person name="Holden M.T.G."/>
            <person name="Sebaihia M."/>
            <person name="Baker S."/>
            <person name="Basham D."/>
            <person name="Brooks K."/>
            <person name="Chillingworth T."/>
            <person name="Connerton P."/>
            <person name="Cronin A."/>
            <person name="Davis P."/>
            <person name="Davies R.M."/>
            <person name="Dowd L."/>
            <person name="White N."/>
            <person name="Farrar J."/>
            <person name="Feltwell T."/>
            <person name="Hamlin N."/>
            <person name="Haque A."/>
            <person name="Hien T.T."/>
            <person name="Holroyd S."/>
            <person name="Jagels K."/>
            <person name="Krogh A."/>
            <person name="Larsen T.S."/>
            <person name="Leather S."/>
            <person name="Moule S."/>
            <person name="O'Gaora P."/>
            <person name="Parry C."/>
            <person name="Quail M.A."/>
            <person name="Rutherford K.M."/>
            <person name="Simmonds M."/>
            <person name="Skelton J."/>
            <person name="Stevens K."/>
            <person name="Whitehead S."/>
            <person name="Barrell B.G."/>
        </authorList>
    </citation>
    <scope>NUCLEOTIDE SEQUENCE [LARGE SCALE GENOMIC DNA]</scope>
    <source>
        <strain>CT18</strain>
    </source>
</reference>
<reference key="2">
    <citation type="journal article" date="2003" name="J. Bacteriol.">
        <title>Comparative genomics of Salmonella enterica serovar Typhi strains Ty2 and CT18.</title>
        <authorList>
            <person name="Deng W."/>
            <person name="Liou S.-R."/>
            <person name="Plunkett G. III"/>
            <person name="Mayhew G.F."/>
            <person name="Rose D.J."/>
            <person name="Burland V."/>
            <person name="Kodoyianni V."/>
            <person name="Schwartz D.C."/>
            <person name="Blattner F.R."/>
        </authorList>
    </citation>
    <scope>NUCLEOTIDE SEQUENCE [LARGE SCALE GENOMIC DNA]</scope>
    <source>
        <strain>ATCC 700931 / Ty2</strain>
    </source>
</reference>
<gene>
    <name evidence="1" type="primary">pgl</name>
    <name type="ordered locus">STY0818</name>
    <name type="ordered locus">t2102</name>
</gene>
<keyword id="KW-0119">Carbohydrate metabolism</keyword>
<keyword id="KW-0313">Glucose metabolism</keyword>
<keyword id="KW-0378">Hydrolase</keyword>
<name>6PGL_SALTI</name>
<feature type="chain" id="PRO_0000171138" description="6-phosphogluconolactonase">
    <location>
        <begin position="1"/>
        <end position="331"/>
    </location>
</feature>
<sequence>MKQTVYTASPESQQIHVWSLNHEGTLTLVQVVDVPGQVQPMVVSPDKRYLYVGVRPEFRVLAYRIAPDDGALTFAAESALPGSPTHISTDHHGRFVFVGSYNAGNVSVTRLQDGLPVELVDVVEGLDGCHSANITPDNRTLWVPALKQDRICLFTLSDDGHLVAQEPAEVNTVEGAGPRHMVFHPNRQYAYCVNELNSSVDVWQLKNPHGEIECVQTLDMMPADFSDTRWAADIHITPDGRHLYACDRTASLITVFSVSEDGSVLSVEGFQPTEAQPRGFNIDNSRKYLIAAGQKSHHIAVYEITGTQGLLTEKGRYAVGQGPMWVVVNAY</sequence>
<accession>Q8Z8A2</accession>
<accession>Q7C8Q6</accession>
<evidence type="ECO:0000255" key="1">
    <source>
        <dbReference type="HAMAP-Rule" id="MF_01605"/>
    </source>
</evidence>
<organism>
    <name type="scientific">Salmonella typhi</name>
    <dbReference type="NCBI Taxonomy" id="90370"/>
    <lineage>
        <taxon>Bacteria</taxon>
        <taxon>Pseudomonadati</taxon>
        <taxon>Pseudomonadota</taxon>
        <taxon>Gammaproteobacteria</taxon>
        <taxon>Enterobacterales</taxon>
        <taxon>Enterobacteriaceae</taxon>
        <taxon>Salmonella</taxon>
    </lineage>
</organism>
<comment type="function">
    <text evidence="1">Catalyzes the hydrolysis of 6-phosphogluconolactone to 6-phosphogluconate.</text>
</comment>
<comment type="catalytic activity">
    <reaction evidence="1">
        <text>6-phospho-D-glucono-1,5-lactone + H2O = 6-phospho-D-gluconate + H(+)</text>
        <dbReference type="Rhea" id="RHEA:12556"/>
        <dbReference type="ChEBI" id="CHEBI:15377"/>
        <dbReference type="ChEBI" id="CHEBI:15378"/>
        <dbReference type="ChEBI" id="CHEBI:57955"/>
        <dbReference type="ChEBI" id="CHEBI:58759"/>
        <dbReference type="EC" id="3.1.1.31"/>
    </reaction>
</comment>
<comment type="pathway">
    <text evidence="1">Carbohydrate degradation; pentose phosphate pathway; D-ribulose 5-phosphate from D-glucose 6-phosphate (oxidative stage): step 2/3.</text>
</comment>
<comment type="similarity">
    <text evidence="1">Belongs to the cycloisomerase 2 family.</text>
</comment>